<feature type="signal peptide">
    <location>
        <begin position="1"/>
        <end position="21"/>
    </location>
</feature>
<feature type="chain" id="PRO_0000016494" description="T-cell surface glycoprotein CD3 zeta chain">
    <location>
        <begin position="22"/>
        <end position="164"/>
    </location>
</feature>
<feature type="topological domain" description="Extracellular" evidence="3">
    <location>
        <begin position="22"/>
        <end position="30"/>
    </location>
</feature>
<feature type="transmembrane region" description="Helical" evidence="3">
    <location>
        <begin position="31"/>
        <end position="51"/>
    </location>
</feature>
<feature type="topological domain" description="Cytoplasmic" evidence="3">
    <location>
        <begin position="52"/>
        <end position="164"/>
    </location>
</feature>
<feature type="domain" description="ITAM 1" evidence="4">
    <location>
        <begin position="61"/>
        <end position="89"/>
    </location>
</feature>
<feature type="domain" description="ITAM 2" evidence="4">
    <location>
        <begin position="100"/>
        <end position="128"/>
    </location>
</feature>
<feature type="domain" description="ITAM 3" evidence="4">
    <location>
        <begin position="131"/>
        <end position="159"/>
    </location>
</feature>
<feature type="region of interest" description="Disordered" evidence="5">
    <location>
        <begin position="87"/>
        <end position="111"/>
    </location>
</feature>
<feature type="region of interest" description="Disordered" evidence="5">
    <location>
        <begin position="124"/>
        <end position="143"/>
    </location>
</feature>
<feature type="compositionally biased region" description="Basic and acidic residues" evidence="5">
    <location>
        <begin position="87"/>
        <end position="96"/>
    </location>
</feature>
<feature type="modified residue" description="Blocked amino end (Gln)">
    <location>
        <position position="22"/>
    </location>
</feature>
<feature type="modified residue" description="Phosphoserine" evidence="2">
    <location>
        <position position="58"/>
    </location>
</feature>
<feature type="modified residue" description="Phosphotyrosine" evidence="2 4">
    <location>
        <position position="72"/>
    </location>
</feature>
<feature type="modified residue" description="Phosphotyrosine" evidence="2 4">
    <location>
        <position position="83"/>
    </location>
</feature>
<feature type="modified residue" description="Phosphotyrosine" evidence="2 4">
    <location>
        <position position="111"/>
    </location>
</feature>
<feature type="modified residue" description="Phosphotyrosine" evidence="2 4">
    <location>
        <position position="123"/>
    </location>
</feature>
<feature type="modified residue" description="Phosphotyrosine" evidence="2 4">
    <location>
        <position position="142"/>
    </location>
</feature>
<feature type="modified residue" description="Phosphotyrosine" evidence="2 4">
    <location>
        <position position="153"/>
    </location>
</feature>
<feature type="splice variant" id="VSP_058346" description="In isoform CD-3-eta.">
    <original>GLSTATKDTYDALHMQTLAPR</original>
    <variation>DSHFQAVQFGNRREREGSELTRTLGLRARPKGESTQQSSQSCASVFSIPTLWSPWPPSSSSQL</variation>
    <location>
        <begin position="144"/>
        <end position="164"/>
    </location>
</feature>
<feature type="sequence conflict" description="In Ref. 4; BAB30997." evidence="11" ref="4">
    <original>Y</original>
    <variation>C</variation>
    <location>
        <position position="153"/>
    </location>
</feature>
<accession>P24161</accession>
<accession>P29020</accession>
<accession>Q9D3G3</accession>
<sequence length="164" mass="18637">MKWKVSVLACILHVRFPGAEAQSFGLLDPKLCYLLDGILFIYGVIITALYLRAKFSRSAETAANLQDPNQLYNELNLGRREEYDVLEKKRARDPEMGGKQQRRRNPQEGVYNALQKDKMAEAYSEIGTKGERRRGKGHDGLYQGLSTATKDTYDALHMQTLAPR</sequence>
<protein>
    <recommendedName>
        <fullName>T-cell surface glycoprotein CD3 zeta chain</fullName>
    </recommendedName>
    <alternativeName>
        <fullName>T-cell receptor T3 zeta chain</fullName>
    </alternativeName>
    <cdAntigenName>CD247</cdAntigenName>
</protein>
<evidence type="ECO:0000250" key="1"/>
<evidence type="ECO:0000250" key="2">
    <source>
        <dbReference type="UniProtKB" id="P20963"/>
    </source>
</evidence>
<evidence type="ECO:0000255" key="3"/>
<evidence type="ECO:0000255" key="4">
    <source>
        <dbReference type="PROSITE-ProRule" id="PRU00379"/>
    </source>
</evidence>
<evidence type="ECO:0000256" key="5">
    <source>
        <dbReference type="SAM" id="MobiDB-lite"/>
    </source>
</evidence>
<evidence type="ECO:0000269" key="6">
    <source>
    </source>
</evidence>
<evidence type="ECO:0000269" key="7">
    <source>
    </source>
</evidence>
<evidence type="ECO:0000269" key="8">
    <source>
    </source>
</evidence>
<evidence type="ECO:0000269" key="9">
    <source>
    </source>
</evidence>
<evidence type="ECO:0000269" key="10">
    <source>
    </source>
</evidence>
<evidence type="ECO:0000305" key="11"/>
<organism>
    <name type="scientific">Mus musculus</name>
    <name type="common">Mouse</name>
    <dbReference type="NCBI Taxonomy" id="10090"/>
    <lineage>
        <taxon>Eukaryota</taxon>
        <taxon>Metazoa</taxon>
        <taxon>Chordata</taxon>
        <taxon>Craniata</taxon>
        <taxon>Vertebrata</taxon>
        <taxon>Euteleostomi</taxon>
        <taxon>Mammalia</taxon>
        <taxon>Eutheria</taxon>
        <taxon>Euarchontoglires</taxon>
        <taxon>Glires</taxon>
        <taxon>Rodentia</taxon>
        <taxon>Myomorpha</taxon>
        <taxon>Muroidea</taxon>
        <taxon>Muridae</taxon>
        <taxon>Murinae</taxon>
        <taxon>Mus</taxon>
        <taxon>Mus</taxon>
    </lineage>
</organism>
<reference key="1">
    <citation type="journal article" date="1988" name="Science">
        <title>Molecular cloning of the zeta chain of the T cell antigen receptor.</title>
        <authorList>
            <person name="Weissman A.M."/>
            <person name="Baniyash M."/>
            <person name="Hou D."/>
            <person name="Samelson L.E."/>
            <person name="Burgess W.H."/>
            <person name="Klausner R.D."/>
        </authorList>
    </citation>
    <scope>NUCLEOTIDE SEQUENCE [GENOMIC DNA] (ISOFORM CD-3-ZETA)</scope>
    <scope>PARTIAL PROTEIN SEQUENCE</scope>
</reference>
<reference key="2">
    <citation type="journal article" date="1989" name="J. Biol. Chem.">
        <title>The isolation and characterization of the murine T cell antigen receptor zeta chain gene.</title>
        <authorList>
            <person name="Baniyash M."/>
            <person name="Hsu V.W."/>
            <person name="Seldin M.F."/>
            <person name="Klausner R.D."/>
        </authorList>
    </citation>
    <scope>NUCLEOTIDE SEQUENCE [MRNA] (ISOFORM CD-3-ZETA)</scope>
    <source>
        <tissue>Liver</tissue>
    </source>
</reference>
<reference key="3">
    <citation type="journal article" date="1990" name="Proc. Natl. Acad. Sci. U.S.A.">
        <title>Molecular cloning of the CD3 eta subunit identifies a CD3 zeta-related product in thymus-derived cells.</title>
        <authorList>
            <person name="Jin Y.J."/>
            <person name="Clayton L.K."/>
            <person name="Howard F.D."/>
            <person name="Koyasu S."/>
            <person name="Sieh M."/>
            <person name="Steinbrich R."/>
            <person name="Tarr G.E."/>
            <person name="Reinherz E.L."/>
        </authorList>
    </citation>
    <scope>NUCLEOTIDE SEQUENCE [MRNA] (ISOFORM CD-3-ETA)</scope>
    <scope>PARTIAL PROTEIN SEQUENCE</scope>
    <scope>BLOCKAGE OF N-TERMINUS</scope>
</reference>
<reference key="4">
    <citation type="journal article" date="2005" name="Science">
        <title>The transcriptional landscape of the mammalian genome.</title>
        <authorList>
            <person name="Carninci P."/>
            <person name="Kasukawa T."/>
            <person name="Katayama S."/>
            <person name="Gough J."/>
            <person name="Frith M.C."/>
            <person name="Maeda N."/>
            <person name="Oyama R."/>
            <person name="Ravasi T."/>
            <person name="Lenhard B."/>
            <person name="Wells C."/>
            <person name="Kodzius R."/>
            <person name="Shimokawa K."/>
            <person name="Bajic V.B."/>
            <person name="Brenner S.E."/>
            <person name="Batalov S."/>
            <person name="Forrest A.R."/>
            <person name="Zavolan M."/>
            <person name="Davis M.J."/>
            <person name="Wilming L.G."/>
            <person name="Aidinis V."/>
            <person name="Allen J.E."/>
            <person name="Ambesi-Impiombato A."/>
            <person name="Apweiler R."/>
            <person name="Aturaliya R.N."/>
            <person name="Bailey T.L."/>
            <person name="Bansal M."/>
            <person name="Baxter L."/>
            <person name="Beisel K.W."/>
            <person name="Bersano T."/>
            <person name="Bono H."/>
            <person name="Chalk A.M."/>
            <person name="Chiu K.P."/>
            <person name="Choudhary V."/>
            <person name="Christoffels A."/>
            <person name="Clutterbuck D.R."/>
            <person name="Crowe M.L."/>
            <person name="Dalla E."/>
            <person name="Dalrymple B.P."/>
            <person name="de Bono B."/>
            <person name="Della Gatta G."/>
            <person name="di Bernardo D."/>
            <person name="Down T."/>
            <person name="Engstrom P."/>
            <person name="Fagiolini M."/>
            <person name="Faulkner G."/>
            <person name="Fletcher C.F."/>
            <person name="Fukushima T."/>
            <person name="Furuno M."/>
            <person name="Futaki S."/>
            <person name="Gariboldi M."/>
            <person name="Georgii-Hemming P."/>
            <person name="Gingeras T.R."/>
            <person name="Gojobori T."/>
            <person name="Green R.E."/>
            <person name="Gustincich S."/>
            <person name="Harbers M."/>
            <person name="Hayashi Y."/>
            <person name="Hensch T.K."/>
            <person name="Hirokawa N."/>
            <person name="Hill D."/>
            <person name="Huminiecki L."/>
            <person name="Iacono M."/>
            <person name="Ikeo K."/>
            <person name="Iwama A."/>
            <person name="Ishikawa T."/>
            <person name="Jakt M."/>
            <person name="Kanapin A."/>
            <person name="Katoh M."/>
            <person name="Kawasawa Y."/>
            <person name="Kelso J."/>
            <person name="Kitamura H."/>
            <person name="Kitano H."/>
            <person name="Kollias G."/>
            <person name="Krishnan S.P."/>
            <person name="Kruger A."/>
            <person name="Kummerfeld S.K."/>
            <person name="Kurochkin I.V."/>
            <person name="Lareau L.F."/>
            <person name="Lazarevic D."/>
            <person name="Lipovich L."/>
            <person name="Liu J."/>
            <person name="Liuni S."/>
            <person name="McWilliam S."/>
            <person name="Madan Babu M."/>
            <person name="Madera M."/>
            <person name="Marchionni L."/>
            <person name="Matsuda H."/>
            <person name="Matsuzawa S."/>
            <person name="Miki H."/>
            <person name="Mignone F."/>
            <person name="Miyake S."/>
            <person name="Morris K."/>
            <person name="Mottagui-Tabar S."/>
            <person name="Mulder N."/>
            <person name="Nakano N."/>
            <person name="Nakauchi H."/>
            <person name="Ng P."/>
            <person name="Nilsson R."/>
            <person name="Nishiguchi S."/>
            <person name="Nishikawa S."/>
            <person name="Nori F."/>
            <person name="Ohara O."/>
            <person name="Okazaki Y."/>
            <person name="Orlando V."/>
            <person name="Pang K.C."/>
            <person name="Pavan W.J."/>
            <person name="Pavesi G."/>
            <person name="Pesole G."/>
            <person name="Petrovsky N."/>
            <person name="Piazza S."/>
            <person name="Reed J."/>
            <person name="Reid J.F."/>
            <person name="Ring B.Z."/>
            <person name="Ringwald M."/>
            <person name="Rost B."/>
            <person name="Ruan Y."/>
            <person name="Salzberg S.L."/>
            <person name="Sandelin A."/>
            <person name="Schneider C."/>
            <person name="Schoenbach C."/>
            <person name="Sekiguchi K."/>
            <person name="Semple C.A."/>
            <person name="Seno S."/>
            <person name="Sessa L."/>
            <person name="Sheng Y."/>
            <person name="Shibata Y."/>
            <person name="Shimada H."/>
            <person name="Shimada K."/>
            <person name="Silva D."/>
            <person name="Sinclair B."/>
            <person name="Sperling S."/>
            <person name="Stupka E."/>
            <person name="Sugiura K."/>
            <person name="Sultana R."/>
            <person name="Takenaka Y."/>
            <person name="Taki K."/>
            <person name="Tammoja K."/>
            <person name="Tan S.L."/>
            <person name="Tang S."/>
            <person name="Taylor M.S."/>
            <person name="Tegner J."/>
            <person name="Teichmann S.A."/>
            <person name="Ueda H.R."/>
            <person name="van Nimwegen E."/>
            <person name="Verardo R."/>
            <person name="Wei C.L."/>
            <person name="Yagi K."/>
            <person name="Yamanishi H."/>
            <person name="Zabarovsky E."/>
            <person name="Zhu S."/>
            <person name="Zimmer A."/>
            <person name="Hide W."/>
            <person name="Bult C."/>
            <person name="Grimmond S.M."/>
            <person name="Teasdale R.D."/>
            <person name="Liu E.T."/>
            <person name="Brusic V."/>
            <person name="Quackenbush J."/>
            <person name="Wahlestedt C."/>
            <person name="Mattick J.S."/>
            <person name="Hume D.A."/>
            <person name="Kai C."/>
            <person name="Sasaki D."/>
            <person name="Tomaru Y."/>
            <person name="Fukuda S."/>
            <person name="Kanamori-Katayama M."/>
            <person name="Suzuki M."/>
            <person name="Aoki J."/>
            <person name="Arakawa T."/>
            <person name="Iida J."/>
            <person name="Imamura K."/>
            <person name="Itoh M."/>
            <person name="Kato T."/>
            <person name="Kawaji H."/>
            <person name="Kawagashira N."/>
            <person name="Kawashima T."/>
            <person name="Kojima M."/>
            <person name="Kondo S."/>
            <person name="Konno H."/>
            <person name="Nakano K."/>
            <person name="Ninomiya N."/>
            <person name="Nishio T."/>
            <person name="Okada M."/>
            <person name="Plessy C."/>
            <person name="Shibata K."/>
            <person name="Shiraki T."/>
            <person name="Suzuki S."/>
            <person name="Tagami M."/>
            <person name="Waki K."/>
            <person name="Watahiki A."/>
            <person name="Okamura-Oho Y."/>
            <person name="Suzuki H."/>
            <person name="Kawai J."/>
            <person name="Hayashizaki Y."/>
        </authorList>
    </citation>
    <scope>NUCLEOTIDE SEQUENCE [LARGE SCALE MRNA] (ISOFORM CD-3-ZETA)</scope>
    <source>
        <strain>C57BL/6J</strain>
        <tissue>Thymus</tissue>
    </source>
</reference>
<reference key="5">
    <citation type="journal article" date="2004" name="Genome Res.">
        <title>The status, quality, and expansion of the NIH full-length cDNA project: the Mammalian Gene Collection (MGC).</title>
        <authorList>
            <consortium name="The MGC Project Team"/>
        </authorList>
    </citation>
    <scope>NUCLEOTIDE SEQUENCE [LARGE SCALE MRNA] (ISOFORM CD-3-ZETA)</scope>
    <source>
        <strain>C57BL/6J</strain>
        <tissue>Hematopoietic</tissue>
    </source>
</reference>
<reference key="6">
    <citation type="journal article" date="1990" name="Int. Immunol.">
        <title>CD3 zeta and eta chains are produced by alternative splicing from a common gene.</title>
        <authorList>
            <person name="Ohno H."/>
            <person name="Saito T."/>
        </authorList>
    </citation>
    <scope>PARTIAL NUCLEOTIDE SEQUENCE (ISOFORM CD-3-ETA)</scope>
    <scope>ALTERNATIVE SPLICING</scope>
</reference>
<reference key="7">
    <citation type="journal article" date="1992" name="Int. Immunol.">
        <authorList>
            <person name="Ohno H."/>
            <person name="Saito T."/>
        </authorList>
    </citation>
    <scope>ERRATUM OF PUBMED:2150596</scope>
</reference>
<reference key="8">
    <citation type="journal article" date="1991" name="Proc. Natl. Acad. Sci. U.S.A.">
        <title>CD3 eta and CD3 zeta are alternatively spliced products of a common genetic locus and are transcriptionally and/or post-transcriptionally regulated during T-cell development.</title>
        <authorList>
            <person name="Clayton L.K."/>
            <person name="D'Adamio L."/>
            <person name="Sieh M."/>
            <person name="Hussey R.E."/>
            <person name="Koyasu S."/>
            <person name="Reinherz E.L."/>
            <person name="Howard F.B."/>
        </authorList>
    </citation>
    <scope>PARTIAL NUCLEOTIDE SEQUENCE [GENOMIC DNA] (ISOFORM CD-3-ETA)</scope>
</reference>
<reference key="9">
    <citation type="journal article" date="1993" name="EMBO J.">
        <title>Abnormal T cell development in CD3-zeta-/- mutant mice and identification of a novel T cell population in the intestine.</title>
        <authorList>
            <person name="Liu C.P."/>
            <person name="Ueda R."/>
            <person name="She J."/>
            <person name="Sancho J."/>
            <person name="Wang B."/>
            <person name="Weddell G."/>
            <person name="Loring J."/>
            <person name="Kurahara C."/>
            <person name="Dudley E.C."/>
            <person name="Hayday A."/>
        </authorList>
    </citation>
    <scope>DISRUPTION PHENOTYPE</scope>
    <scope>FUNCTION</scope>
</reference>
<reference key="10">
    <citation type="journal article" date="1998" name="J. Biol. Chem.">
        <title>Physical and functional association between thymic shared antigen-1/stem cell antigen-2 and the T cell receptor complex.</title>
        <authorList>
            <person name="Kosugi A."/>
            <person name="Saitoh S."/>
            <person name="Noda S."/>
            <person name="Miyake K."/>
            <person name="Yamashita Y."/>
            <person name="Kimoto M."/>
            <person name="Ogata M."/>
            <person name="Hamaoka T."/>
        </authorList>
    </citation>
    <scope>INTERACTION WITH LY6E</scope>
    <scope>SUBCELLULAR LOCATION</scope>
    <scope>PHOSPHORYLATION</scope>
</reference>
<reference key="11">
    <citation type="journal article" date="2000" name="J. Exp. Med.">
        <title>Src-like adaptor protein (SLAP) is a negative regulator of T cell receptor signaling.</title>
        <authorList>
            <person name="Sosinowski T."/>
            <person name="Pandey A."/>
            <person name="Dixit V.M."/>
            <person name="Weiss A."/>
        </authorList>
    </citation>
    <scope>INTERACTION WITH SLA</scope>
</reference>
<reference key="12">
    <citation type="journal article" date="2002" name="J. Biol. Chem.">
        <title>A novel Src homology 2 domain-containing molecule, Src-like adapter protein-2 (SLAP-2), which negatively regulates T cell receptor signaling.</title>
        <authorList>
            <person name="Pandey A."/>
            <person name="Ibarrola N."/>
            <person name="Kratchmarova I."/>
            <person name="Fernandez M.M."/>
            <person name="Constantinescu S.N."/>
            <person name="Ohara O."/>
            <person name="Sawasdikosol S."/>
            <person name="Lodish H.F."/>
            <person name="Mann M."/>
        </authorList>
    </citation>
    <scope>INTERACTION WITH SLA2</scope>
</reference>
<reference key="13">
    <citation type="journal article" date="2010" name="Cell">
        <title>A tissue-specific atlas of mouse protein phosphorylation and expression.</title>
        <authorList>
            <person name="Huttlin E.L."/>
            <person name="Jedrychowski M.P."/>
            <person name="Elias J.E."/>
            <person name="Goswami T."/>
            <person name="Rad R."/>
            <person name="Beausoleil S.A."/>
            <person name="Villen J."/>
            <person name="Haas W."/>
            <person name="Sowa M.E."/>
            <person name="Gygi S.P."/>
        </authorList>
    </citation>
    <scope>IDENTIFICATION BY MASS SPECTROMETRY [LARGE SCALE ANALYSIS]</scope>
    <source>
        <tissue>Spleen</tissue>
    </source>
</reference>
<reference key="14">
    <citation type="journal article" date="2010" name="Neuron">
        <title>The immune protein CD3zeta is required for normal development of neural circuits in the retina.</title>
        <authorList>
            <person name="Xu H.P."/>
            <person name="Chen H."/>
            <person name="Ding Q."/>
            <person name="Xie Z.H."/>
            <person name="Chen L."/>
            <person name="Diao L."/>
            <person name="Wang P."/>
            <person name="Gan L."/>
            <person name="Crair M.C."/>
            <person name="Tian N."/>
        </authorList>
    </citation>
    <scope>FUNCTION</scope>
    <scope>DISRUPTION PHENOTYPE</scope>
    <scope>TISSUE SPECIFICITY</scope>
</reference>
<keyword id="KW-1064">Adaptive immunity</keyword>
<keyword id="KW-0025">Alternative splicing</keyword>
<keyword id="KW-1003">Cell membrane</keyword>
<keyword id="KW-0903">Direct protein sequencing</keyword>
<keyword id="KW-0391">Immunity</keyword>
<keyword id="KW-0472">Membrane</keyword>
<keyword id="KW-0597">Phosphoprotein</keyword>
<keyword id="KW-0675">Receptor</keyword>
<keyword id="KW-1185">Reference proteome</keyword>
<keyword id="KW-0677">Repeat</keyword>
<keyword id="KW-0732">Signal</keyword>
<keyword id="KW-0812">Transmembrane</keyword>
<keyword id="KW-1133">Transmembrane helix</keyword>
<name>CD3Z_MOUSE</name>
<proteinExistence type="evidence at protein level"/>
<comment type="function">
    <text evidence="2 8 9">Part of the TCR-CD3 complex present on T-lymphocyte cell surface that plays an essential role in adaptive immune response. When antigen presenting cells (APCs) activate T-cell receptor (TCR), TCR-mediated signals are transmitted across the cell membrane by the CD3 chains CD3D, CD3E, CD3G and CD3Z. All CD3 chains contain immunoreceptor tyrosine-based activation motifs (ITAMs) in their cytoplasmic domain. Upon TCR engagement, these motifs become phosphorylated by Src family protein tyrosine kinases LCK and FYN, resulting in the activation of downstream signaling pathways. CD3Z ITAMs phosphorylation creates multiple docking sites for the protein kinase ZAP70 leading to ZAP70 phosphorylation and its conversion into a catalytically active enzyme. Plays an important role in intrathymic T-cell differentiation. Additionally, participates in the activity-dependent synapse formation of retinal ganglion cells (RGCs) in both the retina and dorsal lateral geniculate nucleus (dLGN).</text>
</comment>
<comment type="subunit">
    <text evidence="2 6 7 10">The TCR-CD3 complex is composed of a CD3D/CD3E and a CD3G/CD3E heterodimers that preferentially associate with TCRalpha and TCRbeta, respectively, to form TCRalpha/CD3E/CD3G and TCRbeta/CD3G/CD3E trimers. In turn, the hexamer interacts with CD3Z homodimer to form the TCR-CD3 complex. Alternatively, TCRalpha and TCRbeta can be replaced by TCRgamma and TCRdelta. Interacts with SLA (PubMed:10662792). Interacts with SLA2 (PubMed:11891219). Interacts with TRAT1. Interacts with DOCK2. Interacts with SHB. Interacts with ZAP70. Interacts (tyrosine phosphorylated) with SHC1 (via SH2 domain). Interacts with PTPRC (By similarity). Interacts with CRK; this interaction regulates CD3Z phosphorylation (By similarity). Interacts (on T cell side) with CD81, ICAM1 and CD9 at immunological synapses between antigen-presenting cells and T cells. Interacts with CD160. Interacts with LY6E. Interacts with LY6E (By similarity). The signaling subunit of immunoglobulin gamma (IgG) Fc receptor complex. As a homodimer or a heterodimer with FCER1G, associates with the ligand binding subunit FCGR3A (via transmembrane domain); this interaction is a prerequisite for Fc receptor complex expression on the cell surface. Interacts with CD5 (By similarity).</text>
</comment>
<comment type="interaction">
    <interactant intactId="EBI-7803400">
        <id>P24161</id>
    </interactant>
    <interactant intactId="EBI-7249866">
        <id>Q9WU22</id>
        <label>Ptpn4</label>
    </interactant>
    <organismsDiffer>false</organismsDiffer>
    <experiments>3</experiments>
</comment>
<comment type="interaction">
    <interactant intactId="EBI-7803400">
        <id>P24161</id>
    </interactant>
    <interactant intactId="EBI-3862932">
        <id>P43404</id>
        <label>Zap70</label>
    </interactant>
    <organismsDiffer>false</organismsDiffer>
    <experiments>4</experiments>
</comment>
<comment type="subcellular location">
    <subcellularLocation>
        <location evidence="10">Cell membrane</location>
        <topology>Single-pass type I membrane protein</topology>
    </subcellularLocation>
</comment>
<comment type="alternative products">
    <event type="alternative splicing"/>
    <isoform>
        <id>P24161-1</id>
        <name>CD-3-zeta</name>
        <sequence type="displayed"/>
    </isoform>
    <isoform>
        <id>P24161-2</id>
        <name>CD-3-eta</name>
        <sequence type="described" ref="VSP_058346"/>
    </isoform>
</comment>
<comment type="tissue specificity">
    <text evidence="8 11">CD3Z is expressed in normal lymphoid tissue and in peripheral blood mononuclear cells (PBMCs). Expressed also in retinal ganglion cells (PubMed:20188655).</text>
</comment>
<comment type="domain">
    <text evidence="1">The ITAM domains mediate interaction with SHB.</text>
</comment>
<comment type="PTM">
    <text evidence="10">Phosphorylated on Tyr residues after T-cell receptor triggering by LCK in association with CD4/CD8.</text>
</comment>
<comment type="disruption phenotype">
    <text evidence="8 9">CD3Z deletion causes severely defective thymocyte differentiation (PubMed:8223495). Absence of CD3Z also leads to altered dendritic structure and motility in developing retina (PubMed:20188655).</text>
</comment>
<comment type="similarity">
    <text evidence="11">Belongs to the CD3Z/FCER1G family.</text>
</comment>
<gene>
    <name type="primary">Cd247</name>
    <name type="synonym">Cd3z</name>
    <name type="synonym">Tcrz</name>
</gene>
<dbReference type="EMBL" id="M19729">
    <property type="protein sequence ID" value="AAA40171.1"/>
    <property type="molecule type" value="Genomic_DNA"/>
</dbReference>
<dbReference type="EMBL" id="J04967">
    <property type="protein sequence ID" value="AAA50301.1"/>
    <property type="molecule type" value="mRNA"/>
</dbReference>
<dbReference type="EMBL" id="M33158">
    <property type="protein sequence ID" value="AAA37398.1"/>
    <property type="molecule type" value="mRNA"/>
</dbReference>
<dbReference type="EMBL" id="AK017904">
    <property type="protein sequence ID" value="BAB30997.1"/>
    <property type="molecule type" value="mRNA"/>
</dbReference>
<dbReference type="EMBL" id="BC052824">
    <property type="protein sequence ID" value="AAH52824.1"/>
    <property type="molecule type" value="mRNA"/>
</dbReference>
<dbReference type="EMBL" id="M76711">
    <property type="protein sequence ID" value="AAA40403.1"/>
    <property type="molecule type" value="Genomic_DNA"/>
</dbReference>
<dbReference type="CCDS" id="CCDS15443.1">
    <molecule id="P24161-2"/>
</dbReference>
<dbReference type="CCDS" id="CCDS48427.1">
    <molecule id="P24161-1"/>
</dbReference>
<dbReference type="PIR" id="A35900">
    <property type="entry name" value="A35900"/>
</dbReference>
<dbReference type="PIR" id="A40104">
    <property type="entry name" value="A40104"/>
</dbReference>
<dbReference type="RefSeq" id="NP_001106862.1">
    <molecule id="P24161-1"/>
    <property type="nucleotide sequence ID" value="NM_001113391.2"/>
</dbReference>
<dbReference type="RefSeq" id="NP_112439.1">
    <molecule id="P24161-2"/>
    <property type="nucleotide sequence ID" value="NM_031162.4"/>
</dbReference>
<dbReference type="RefSeq" id="XP_011237047.1">
    <molecule id="P24161-1"/>
    <property type="nucleotide sequence ID" value="XM_011238745.4"/>
</dbReference>
<dbReference type="RefSeq" id="XP_017168774.1">
    <molecule id="P24161-1"/>
    <property type="nucleotide sequence ID" value="XM_017313285.2"/>
</dbReference>
<dbReference type="RefSeq" id="XP_036012391.1">
    <molecule id="P24161-1"/>
    <property type="nucleotide sequence ID" value="XM_036156498.1"/>
</dbReference>
<dbReference type="RefSeq" id="XP_036012402.1">
    <molecule id="P24161-1"/>
    <property type="nucleotide sequence ID" value="XM_036156509.1"/>
</dbReference>
<dbReference type="SMR" id="P24161"/>
<dbReference type="BioGRID" id="198598">
    <property type="interactions" value="7"/>
</dbReference>
<dbReference type="CORUM" id="P24161"/>
<dbReference type="ELM" id="P24161"/>
<dbReference type="FunCoup" id="P24161">
    <property type="interactions" value="543"/>
</dbReference>
<dbReference type="IntAct" id="P24161">
    <property type="interactions" value="7"/>
</dbReference>
<dbReference type="MINT" id="P24161"/>
<dbReference type="STRING" id="10090.ENSMUSP00000140926"/>
<dbReference type="iPTMnet" id="P24161"/>
<dbReference type="PhosphoSitePlus" id="P24161"/>
<dbReference type="jPOST" id="P24161"/>
<dbReference type="PaxDb" id="10090-ENSMUSP00000124297"/>
<dbReference type="ProteomicsDB" id="281135">
    <molecule id="P24161-1"/>
</dbReference>
<dbReference type="ProteomicsDB" id="281136">
    <molecule id="P24161-2"/>
</dbReference>
<dbReference type="ABCD" id="P24161">
    <property type="antibodies" value="1 sequenced antibody"/>
</dbReference>
<dbReference type="Antibodypedia" id="1663">
    <property type="antibodies" value="1813 antibodies from 45 providers"/>
</dbReference>
<dbReference type="DNASU" id="12503"/>
<dbReference type="Ensembl" id="ENSMUST00000005907.12">
    <molecule id="P24161-1"/>
    <property type="protein sequence ID" value="ENSMUSP00000005907.6"/>
    <property type="gene ID" value="ENSMUSG00000005763.16"/>
</dbReference>
<dbReference type="Ensembl" id="ENSMUST00000027849.11">
    <molecule id="P24161-2"/>
    <property type="protein sequence ID" value="ENSMUSP00000027849.5"/>
    <property type="gene ID" value="ENSMUSG00000005763.16"/>
</dbReference>
<dbReference type="Ensembl" id="ENSMUST00000086002.11">
    <molecule id="P24161-2"/>
    <property type="protein sequence ID" value="ENSMUSP00000083165.5"/>
    <property type="gene ID" value="ENSMUSG00000005763.16"/>
</dbReference>
<dbReference type="Ensembl" id="ENSMUST00000187313.7">
    <molecule id="P24161-2"/>
    <property type="protein sequence ID" value="ENSMUSP00000140926.2"/>
    <property type="gene ID" value="ENSMUSG00000005763.16"/>
</dbReference>
<dbReference type="GeneID" id="12503"/>
<dbReference type="KEGG" id="mmu:12503"/>
<dbReference type="UCSC" id="uc007djn.2">
    <molecule id="P24161-1"/>
    <property type="organism name" value="mouse"/>
</dbReference>
<dbReference type="AGR" id="MGI:88334"/>
<dbReference type="CTD" id="919"/>
<dbReference type="MGI" id="MGI:88334">
    <property type="gene designation" value="Cd247"/>
</dbReference>
<dbReference type="VEuPathDB" id="HostDB:ENSMUSG00000005763"/>
<dbReference type="eggNOG" id="ENOG502S5AZ">
    <property type="taxonomic scope" value="Eukaryota"/>
</dbReference>
<dbReference type="GeneTree" id="ENSGT00390000018208"/>
<dbReference type="HOGENOM" id="CLU_119104_0_0_1"/>
<dbReference type="InParanoid" id="P24161"/>
<dbReference type="OMA" id="TDPKLCY"/>
<dbReference type="OrthoDB" id="61626at9989"/>
<dbReference type="Reactome" id="R-MMU-198933">
    <property type="pathway name" value="Immunoregulatory interactions between a Lymphoid and a non-Lymphoid cell"/>
</dbReference>
<dbReference type="Reactome" id="R-MMU-202424">
    <property type="pathway name" value="Downstream TCR signaling"/>
</dbReference>
<dbReference type="Reactome" id="R-MMU-202427">
    <property type="pathway name" value="Phosphorylation of CD3 and TCR zeta chains"/>
</dbReference>
<dbReference type="Reactome" id="R-MMU-202430">
    <property type="pathway name" value="Translocation of ZAP-70 to Immunological synapse"/>
</dbReference>
<dbReference type="Reactome" id="R-MMU-202433">
    <property type="pathway name" value="Generation of second messenger molecules"/>
</dbReference>
<dbReference type="Reactome" id="R-MMU-2029481">
    <property type="pathway name" value="FCGR activation"/>
</dbReference>
<dbReference type="Reactome" id="R-MMU-2029482">
    <property type="pathway name" value="Regulation of actin dynamics for phagocytic cup formation"/>
</dbReference>
<dbReference type="Reactome" id="R-MMU-2029485">
    <property type="pathway name" value="Role of phospholipids in phagocytosis"/>
</dbReference>
<dbReference type="Reactome" id="R-MMU-389948">
    <property type="pathway name" value="Co-inhibition by PD-1"/>
</dbReference>
<dbReference type="BioGRID-ORCS" id="12503">
    <property type="hits" value="2 hits in 78 CRISPR screens"/>
</dbReference>
<dbReference type="ChiTaRS" id="Cd247">
    <property type="organism name" value="mouse"/>
</dbReference>
<dbReference type="PRO" id="PR:P24161"/>
<dbReference type="Proteomes" id="UP000000589">
    <property type="component" value="Chromosome 1"/>
</dbReference>
<dbReference type="RNAct" id="P24161">
    <property type="molecule type" value="protein"/>
</dbReference>
<dbReference type="Bgee" id="ENSMUSG00000005763">
    <property type="expression patterns" value="Expressed in thymus and 88 other cell types or tissues"/>
</dbReference>
<dbReference type="ExpressionAtlas" id="P24161">
    <property type="expression patterns" value="baseline and differential"/>
</dbReference>
<dbReference type="GO" id="GO:0042105">
    <property type="term" value="C:alpha-beta T cell receptor complex"/>
    <property type="evidence" value="ECO:0000314"/>
    <property type="project" value="MGI"/>
</dbReference>
<dbReference type="GO" id="GO:0005737">
    <property type="term" value="C:cytoplasm"/>
    <property type="evidence" value="ECO:0000266"/>
    <property type="project" value="MGI"/>
</dbReference>
<dbReference type="GO" id="GO:0033001">
    <property type="term" value="C:Fc-gamma receptor III complex"/>
    <property type="evidence" value="ECO:0000250"/>
    <property type="project" value="UniProtKB"/>
</dbReference>
<dbReference type="GO" id="GO:0005794">
    <property type="term" value="C:Golgi apparatus"/>
    <property type="evidence" value="ECO:0000314"/>
    <property type="project" value="ARUK-UCL"/>
</dbReference>
<dbReference type="GO" id="GO:0005886">
    <property type="term" value="C:plasma membrane"/>
    <property type="evidence" value="ECO:0000314"/>
    <property type="project" value="ARUK-UCL"/>
</dbReference>
<dbReference type="GO" id="GO:0042101">
    <property type="term" value="C:T cell receptor complex"/>
    <property type="evidence" value="ECO:0000266"/>
    <property type="project" value="MGI"/>
</dbReference>
<dbReference type="GO" id="GO:0046982">
    <property type="term" value="F:protein heterodimerization activity"/>
    <property type="evidence" value="ECO:0007669"/>
    <property type="project" value="Ensembl"/>
</dbReference>
<dbReference type="GO" id="GO:0042803">
    <property type="term" value="F:protein homodimerization activity"/>
    <property type="evidence" value="ECO:0000250"/>
    <property type="project" value="UniProtKB"/>
</dbReference>
<dbReference type="GO" id="GO:1990782">
    <property type="term" value="F:protein tyrosine kinase binding"/>
    <property type="evidence" value="ECO:0007669"/>
    <property type="project" value="Ensembl"/>
</dbReference>
<dbReference type="GO" id="GO:0004888">
    <property type="term" value="F:transmembrane signaling receptor activity"/>
    <property type="evidence" value="ECO:0007669"/>
    <property type="project" value="InterPro"/>
</dbReference>
<dbReference type="GO" id="GO:0002250">
    <property type="term" value="P:adaptive immune response"/>
    <property type="evidence" value="ECO:0007669"/>
    <property type="project" value="UniProtKB-KW"/>
</dbReference>
<dbReference type="GO" id="GO:0038094">
    <property type="term" value="P:Fc-gamma receptor signaling pathway"/>
    <property type="evidence" value="ECO:0007669"/>
    <property type="project" value="Ensembl"/>
</dbReference>
<dbReference type="GO" id="GO:2000010">
    <property type="term" value="P:positive regulation of protein localization to cell surface"/>
    <property type="evidence" value="ECO:0000314"/>
    <property type="project" value="MGI"/>
</dbReference>
<dbReference type="GO" id="GO:0051259">
    <property type="term" value="P:protein complex oligomerization"/>
    <property type="evidence" value="ECO:0007669"/>
    <property type="project" value="Ensembl"/>
</dbReference>
<dbReference type="GO" id="GO:0050852">
    <property type="term" value="P:T cell receptor signaling pathway"/>
    <property type="evidence" value="ECO:0000314"/>
    <property type="project" value="MGI"/>
</dbReference>
<dbReference type="InterPro" id="IPR021663">
    <property type="entry name" value="CD3_zeta/IgE_Fc_rcpt_gamma"/>
</dbReference>
<dbReference type="InterPro" id="IPR003110">
    <property type="entry name" value="Phos_immunorcpt_sig_ITAM"/>
</dbReference>
<dbReference type="InterPro" id="IPR024128">
    <property type="entry name" value="T-cell_CD3_zeta"/>
</dbReference>
<dbReference type="PANTHER" id="PTHR10035">
    <property type="entry name" value="T-CELL SURFACE GLYCOPROTEIN CD3 ZETA CHAIN"/>
    <property type="match status" value="1"/>
</dbReference>
<dbReference type="PANTHER" id="PTHR10035:SF2">
    <property type="entry name" value="T-CELL SURFACE GLYCOPROTEIN CD3 ZETA CHAIN"/>
    <property type="match status" value="1"/>
</dbReference>
<dbReference type="Pfam" id="PF02189">
    <property type="entry name" value="ITAM"/>
    <property type="match status" value="2"/>
</dbReference>
<dbReference type="Pfam" id="PF11628">
    <property type="entry name" value="TCR_zetazeta"/>
    <property type="match status" value="1"/>
</dbReference>
<dbReference type="SMART" id="SM00077">
    <property type="entry name" value="ITAM"/>
    <property type="match status" value="3"/>
</dbReference>
<dbReference type="PROSITE" id="PS51055">
    <property type="entry name" value="ITAM_1"/>
    <property type="match status" value="3"/>
</dbReference>